<keyword id="KW-0067">ATP-binding</keyword>
<keyword id="KW-0997">Cell inner membrane</keyword>
<keyword id="KW-1003">Cell membrane</keyword>
<keyword id="KW-0418">Kinase</keyword>
<keyword id="KW-0448">Lipopolysaccharide biosynthesis</keyword>
<keyword id="KW-0472">Membrane</keyword>
<keyword id="KW-0547">Nucleotide-binding</keyword>
<keyword id="KW-1185">Reference proteome</keyword>
<keyword id="KW-0808">Transferase</keyword>
<dbReference type="EC" id="2.7.1.166"/>
<dbReference type="EMBL" id="AY043284">
    <property type="protein sequence ID" value="AAK92207.1"/>
    <property type="molecule type" value="Genomic_DNA"/>
</dbReference>
<dbReference type="EMBL" id="AJ277816">
    <property type="protein sequence ID" value="CAC07180.1"/>
    <property type="molecule type" value="Genomic_DNA"/>
</dbReference>
<dbReference type="EMBL" id="AJ277817">
    <property type="protein sequence ID" value="CAC07181.1"/>
    <property type="molecule type" value="Genomic_DNA"/>
</dbReference>
<dbReference type="EMBL" id="L42023">
    <property type="protein sequence ID" value="AAC21931.1"/>
    <property type="molecule type" value="Genomic_DNA"/>
</dbReference>
<dbReference type="RefSeq" id="NP_438429.1">
    <property type="nucleotide sequence ID" value="NC_000907.1"/>
</dbReference>
<dbReference type="SMR" id="O86224"/>
<dbReference type="STRING" id="71421.HI_0260.1"/>
<dbReference type="EnsemblBacteria" id="AAC21931">
    <property type="protein sequence ID" value="AAC21931"/>
    <property type="gene ID" value="HI_0260.1"/>
</dbReference>
<dbReference type="KEGG" id="hin:HI_0260.1"/>
<dbReference type="PATRIC" id="fig|71421.8.peg.275"/>
<dbReference type="eggNOG" id="COG3642">
    <property type="taxonomic scope" value="Bacteria"/>
</dbReference>
<dbReference type="HOGENOM" id="CLU_094226_0_0_6"/>
<dbReference type="OrthoDB" id="6854449at2"/>
<dbReference type="BioCyc" id="HINF71421:G1GJ1-275-MONOMER"/>
<dbReference type="BioCyc" id="MetaCyc:MONOMER-15507"/>
<dbReference type="BRENDA" id="2.7.1.166">
    <property type="organism ID" value="2529"/>
</dbReference>
<dbReference type="UniPathway" id="UPA00958"/>
<dbReference type="Proteomes" id="UP000000579">
    <property type="component" value="Chromosome"/>
</dbReference>
<dbReference type="GO" id="GO:0005886">
    <property type="term" value="C:plasma membrane"/>
    <property type="evidence" value="ECO:0007669"/>
    <property type="project" value="UniProtKB-SubCell"/>
</dbReference>
<dbReference type="GO" id="GO:0005524">
    <property type="term" value="F:ATP binding"/>
    <property type="evidence" value="ECO:0007669"/>
    <property type="project" value="UniProtKB-UniRule"/>
</dbReference>
<dbReference type="GO" id="GO:0016301">
    <property type="term" value="F:kinase activity"/>
    <property type="evidence" value="ECO:0007669"/>
    <property type="project" value="UniProtKB-KW"/>
</dbReference>
<dbReference type="GO" id="GO:0016773">
    <property type="term" value="F:phosphotransferase activity, alcohol group as acceptor"/>
    <property type="evidence" value="ECO:0007669"/>
    <property type="project" value="UniProtKB-UniRule"/>
</dbReference>
<dbReference type="GO" id="GO:0009244">
    <property type="term" value="P:lipopolysaccharide core region biosynthetic process"/>
    <property type="evidence" value="ECO:0007669"/>
    <property type="project" value="UniProtKB-UniRule"/>
</dbReference>
<dbReference type="Gene3D" id="1.10.510.10">
    <property type="entry name" value="Transferase(Phosphotransferase) domain 1"/>
    <property type="match status" value="1"/>
</dbReference>
<dbReference type="HAMAP" id="MF_00521">
    <property type="entry name" value="KDO_kinase"/>
    <property type="match status" value="1"/>
</dbReference>
<dbReference type="InterPro" id="IPR022826">
    <property type="entry name" value="KDO_kinase"/>
</dbReference>
<dbReference type="InterPro" id="IPR011009">
    <property type="entry name" value="Kinase-like_dom_sf"/>
</dbReference>
<dbReference type="NCBIfam" id="NF002475">
    <property type="entry name" value="PRK01723.1"/>
    <property type="match status" value="1"/>
</dbReference>
<dbReference type="Pfam" id="PF06293">
    <property type="entry name" value="Kdo"/>
    <property type="match status" value="1"/>
</dbReference>
<dbReference type="SUPFAM" id="SSF56112">
    <property type="entry name" value="Protein kinase-like (PK-like)"/>
    <property type="match status" value="1"/>
</dbReference>
<accession>O86224</accession>
<accession>Q9F438</accession>
<organism>
    <name type="scientific">Haemophilus influenzae (strain ATCC 51907 / DSM 11121 / KW20 / Rd)</name>
    <dbReference type="NCBI Taxonomy" id="71421"/>
    <lineage>
        <taxon>Bacteria</taxon>
        <taxon>Pseudomonadati</taxon>
        <taxon>Pseudomonadota</taxon>
        <taxon>Gammaproteobacteria</taxon>
        <taxon>Pasteurellales</taxon>
        <taxon>Pasteurellaceae</taxon>
        <taxon>Haemophilus</taxon>
    </lineage>
</organism>
<sequence length="241" mass="28569">MHQFQQDNQYFIFNFDRTFEQATEFFQAEFWQKQERVIGSAKGRGITYFLQTEDWFGVNCALRHYYRGGLWGKLNKDRYRFSALETTRSFAEFHLLQRLYEAGLPVPKPIAARIQKGKLGICYQADILTEKIENAQDLTALLQTQTLPKETWMQIGRLIRKLHDLQICHTDLNAHNILLQQTEQGQKCWLLDFDKCGEKSADFWKVQNLNRLKRSFEKEVGRMNIQFTEQNWADLTSAYHQ</sequence>
<gene>
    <name type="primary">kdkA</name>
    <name type="ordered locus">HI_0260.1</name>
</gene>
<feature type="chain" id="PRO_0000194313" description="3-deoxy-D-manno-octulosonic acid kinase">
    <location>
        <begin position="1"/>
        <end position="241"/>
    </location>
</feature>
<feature type="active site" evidence="1">
    <location>
        <position position="171"/>
    </location>
</feature>
<feature type="sequence variant" description="In strain: I69.">
    <original>I</original>
    <variation>T</variation>
    <location>
        <position position="46"/>
    </location>
</feature>
<feature type="sequence variant" description="In strain: I69.">
    <original>E</original>
    <variation>D</variation>
    <location>
        <position position="85"/>
    </location>
</feature>
<feature type="sequence variant" description="In strain: I69.">
    <original>TWM</original>
    <variation>IWR</variation>
    <location>
        <begin position="151"/>
        <end position="153"/>
    </location>
</feature>
<feature type="sequence variant" description="In strain: I69.">
    <original>SA</original>
    <variation>LG</variation>
    <location>
        <begin position="200"/>
        <end position="201"/>
    </location>
</feature>
<name>KDKA_HAEIN</name>
<reference key="1">
    <citation type="journal article" date="1999" name="J. Biol. Chem.">
        <title>A Haemophilus influenzae gene that encodes a membrane bound 3-deoxy-D-manno-octulosonic acid (Kdo) kinase. Possible involvement of kdo phosphorylation in bacterial virulence.</title>
        <authorList>
            <person name="White K.A."/>
            <person name="Lin S."/>
            <person name="Cotter R.J."/>
            <person name="Raetz C.R.H."/>
        </authorList>
    </citation>
    <scope>NUCLEOTIDE SEQUENCE [GENOMIC DNA]</scope>
    <scope>FUNCTION</scope>
    <scope>CATALYTIC ACTIVITY</scope>
    <scope>SUBSTRATE SPECIFICITY</scope>
    <scope>KINETIC PARAMETERS</scope>
    <scope>GENE NAME</scope>
    <scope>SUBCELLULAR LOCATION</scope>
    <source>
        <strain>ATCC 51907 / DSM 11121 / KW20 / Rd</strain>
    </source>
</reference>
<reference key="2">
    <citation type="journal article" date="2000" name="J. Biol. Chem.">
        <title>3-deoxy-D-manno-oct-2-ulosonic acid (Kdo) transferase (WaaA) and Kdo kinase (KdkA) of Haemophilus influenzae are both required to complement a waaA knockout mutation of Escherichia coli.</title>
        <authorList>
            <person name="Brabetz W."/>
            <person name="Mueller-Loennies S."/>
            <person name="Brade H."/>
        </authorList>
    </citation>
    <scope>NUCLEOTIDE SEQUENCE [GENOMIC DNA]</scope>
    <scope>FUNCTION</scope>
    <source>
        <strain>ATCC 51907 / DSM 11121 / KW20 / Rd</strain>
        <strain>I69 / Serotype B</strain>
    </source>
</reference>
<reference key="3">
    <citation type="journal article" date="1997" name="J. Biol. Chem.">
        <title>A mono-functional 3-deoxy-D-manno-octulosonic acid (Kdo) transferase and a Kdo kinase in extracts of Haemophilus influenzae.</title>
        <authorList>
            <person name="White K.A."/>
            <person name="Kaltashov I.A."/>
            <person name="Cotter R.J."/>
            <person name="Raetz C.R."/>
        </authorList>
    </citation>
    <scope>FUNCTION</scope>
    <scope>SUBSTRATE SPECIFICITY</scope>
    <scope>PH DEPENDENCE</scope>
    <scope>SUBCELLULAR LOCATION</scope>
    <source>
        <strain>722</strain>
    </source>
</reference>
<reference key="4">
    <citation type="journal article" date="1995" name="Science">
        <title>Whole-genome random sequencing and assembly of Haemophilus influenzae Rd.</title>
        <authorList>
            <person name="Fleischmann R.D."/>
            <person name="Adams M.D."/>
            <person name="White O."/>
            <person name="Clayton R.A."/>
            <person name="Kirkness E.F."/>
            <person name="Kerlavage A.R."/>
            <person name="Bult C.J."/>
            <person name="Tomb J.-F."/>
            <person name="Dougherty B.A."/>
            <person name="Merrick J.M."/>
            <person name="McKenney K."/>
            <person name="Sutton G.G."/>
            <person name="FitzHugh W."/>
            <person name="Fields C.A."/>
            <person name="Gocayne J.D."/>
            <person name="Scott J.D."/>
            <person name="Shirley R."/>
            <person name="Liu L.-I."/>
            <person name="Glodek A."/>
            <person name="Kelley J.M."/>
            <person name="Weidman J.F."/>
            <person name="Phillips C.A."/>
            <person name="Spriggs T."/>
            <person name="Hedblom E."/>
            <person name="Cotton M.D."/>
            <person name="Utterback T.R."/>
            <person name="Hanna M.C."/>
            <person name="Nguyen D.T."/>
            <person name="Saudek D.M."/>
            <person name="Brandon R.C."/>
            <person name="Fine L.D."/>
            <person name="Fritchman J.L."/>
            <person name="Fuhrmann J.L."/>
            <person name="Geoghagen N.S.M."/>
            <person name="Gnehm C.L."/>
            <person name="McDonald L.A."/>
            <person name="Small K.V."/>
            <person name="Fraser C.M."/>
            <person name="Smith H.O."/>
            <person name="Venter J.C."/>
        </authorList>
    </citation>
    <scope>NUCLEOTIDE SEQUENCE [LARGE SCALE GENOMIC DNA]</scope>
    <source>
        <strain>ATCC 51907 / DSM 11121 / KW20 / Rd</strain>
    </source>
</reference>
<reference key="5">
    <citation type="submission" date="1998-05" db="EMBL/GenBank/DDBJ databases">
        <authorList>
            <person name="White O."/>
            <person name="Clayton R.A."/>
            <person name="Kerlavage A.R."/>
            <person name="Fleischmann R.D."/>
            <person name="Peterson J."/>
            <person name="Hickey E."/>
            <person name="Dodson R."/>
            <person name="Gwinn M."/>
        </authorList>
    </citation>
    <scope>IDENTIFICATION</scope>
</reference>
<protein>
    <recommendedName>
        <fullName>3-deoxy-D-manno-octulosonic acid kinase</fullName>
        <shortName>Kdo kinase</shortName>
        <ecNumber>2.7.1.166</ecNumber>
    </recommendedName>
</protein>
<evidence type="ECO:0000255" key="1"/>
<evidence type="ECO:0000269" key="2">
    <source>
    </source>
</evidence>
<evidence type="ECO:0000269" key="3">
    <source>
    </source>
</evidence>
<evidence type="ECO:0000269" key="4">
    <source>
    </source>
</evidence>
<evidence type="ECO:0000305" key="5"/>
<evidence type="ECO:0000305" key="6">
    <source>
    </source>
</evidence>
<evidence type="ECO:0000305" key="7">
    <source>
    </source>
</evidence>
<proteinExistence type="evidence at protein level"/>
<comment type="function">
    <text evidence="2 3 4">Catalyzes the ATP-dependent phosphorylation of the 3-deoxy-D-manno-octulosonic acid (Kdo) residue in Kdo-lipid IV(A) at the 4-OH position. To a lesser extent, can use GTP instead of ATP as substrate.</text>
</comment>
<comment type="catalytic activity">
    <reaction evidence="2">
        <text>an alpha-Kdo-(2-&gt;6)-lipid IVA + ATP = a 4-O-phospho-alpha-Kdo-(2-&gt;6)-lipid IVA + ADP + H(+)</text>
        <dbReference type="Rhea" id="RHEA:74271"/>
        <dbReference type="ChEBI" id="CHEBI:15378"/>
        <dbReference type="ChEBI" id="CHEBI:30616"/>
        <dbReference type="ChEBI" id="CHEBI:176428"/>
        <dbReference type="ChEBI" id="CHEBI:193140"/>
        <dbReference type="ChEBI" id="CHEBI:456216"/>
        <dbReference type="EC" id="2.7.1.166"/>
    </reaction>
</comment>
<comment type="biophysicochemical properties">
    <kinetics>
        <KM evidence="2">11.6 uM for Kdo-lipid IV(A)</KM>
        <Vmax evidence="2">73625.0 nmol/min/mg enzyme</Vmax>
    </kinetics>
    <phDependence>
        <text evidence="4">Optimum pH is 7.5.</text>
    </phDependence>
</comment>
<comment type="pathway">
    <text>Bacterial outer membrane biogenesis; LPS core biosynthesis.</text>
</comment>
<comment type="subcellular location">
    <subcellularLocation>
        <location evidence="6 7">Cell inner membrane</location>
        <topology evidence="6 7">Peripheral membrane protein</topology>
        <orientation evidence="6 7">Cytoplasmic side</orientation>
    </subcellularLocation>
</comment>
<comment type="similarity">
    <text evidence="5">Belongs to the protein kinase superfamily. KdkA/RfaP family.</text>
</comment>